<reference key="1">
    <citation type="journal article" date="2003" name="Nature">
        <title>The genome sequence of the filamentous fungus Neurospora crassa.</title>
        <authorList>
            <person name="Galagan J.E."/>
            <person name="Calvo S.E."/>
            <person name="Borkovich K.A."/>
            <person name="Selker E.U."/>
            <person name="Read N.D."/>
            <person name="Jaffe D.B."/>
            <person name="FitzHugh W."/>
            <person name="Ma L.-J."/>
            <person name="Smirnov S."/>
            <person name="Purcell S."/>
            <person name="Rehman B."/>
            <person name="Elkins T."/>
            <person name="Engels R."/>
            <person name="Wang S."/>
            <person name="Nielsen C.B."/>
            <person name="Butler J."/>
            <person name="Endrizzi M."/>
            <person name="Qui D."/>
            <person name="Ianakiev P."/>
            <person name="Bell-Pedersen D."/>
            <person name="Nelson M.A."/>
            <person name="Werner-Washburne M."/>
            <person name="Selitrennikoff C.P."/>
            <person name="Kinsey J.A."/>
            <person name="Braun E.L."/>
            <person name="Zelter A."/>
            <person name="Schulte U."/>
            <person name="Kothe G.O."/>
            <person name="Jedd G."/>
            <person name="Mewes H.-W."/>
            <person name="Staben C."/>
            <person name="Marcotte E."/>
            <person name="Greenberg D."/>
            <person name="Roy A."/>
            <person name="Foley K."/>
            <person name="Naylor J."/>
            <person name="Stange-Thomann N."/>
            <person name="Barrett R."/>
            <person name="Gnerre S."/>
            <person name="Kamal M."/>
            <person name="Kamvysselis M."/>
            <person name="Mauceli E.W."/>
            <person name="Bielke C."/>
            <person name="Rudd S."/>
            <person name="Frishman D."/>
            <person name="Krystofova S."/>
            <person name="Rasmussen C."/>
            <person name="Metzenberg R.L."/>
            <person name="Perkins D.D."/>
            <person name="Kroken S."/>
            <person name="Cogoni C."/>
            <person name="Macino G."/>
            <person name="Catcheside D.E.A."/>
            <person name="Li W."/>
            <person name="Pratt R.J."/>
            <person name="Osmani S.A."/>
            <person name="DeSouza C.P.C."/>
            <person name="Glass N.L."/>
            <person name="Orbach M.J."/>
            <person name="Berglund J.A."/>
            <person name="Voelker R."/>
            <person name="Yarden O."/>
            <person name="Plamann M."/>
            <person name="Seiler S."/>
            <person name="Dunlap J.C."/>
            <person name="Radford A."/>
            <person name="Aramayo R."/>
            <person name="Natvig D.O."/>
            <person name="Alex L.A."/>
            <person name="Mannhaupt G."/>
            <person name="Ebbole D.J."/>
            <person name="Freitag M."/>
            <person name="Paulsen I."/>
            <person name="Sachs M.S."/>
            <person name="Lander E.S."/>
            <person name="Nusbaum C."/>
            <person name="Birren B.W."/>
        </authorList>
    </citation>
    <scope>NUCLEOTIDE SEQUENCE [LARGE SCALE GENOMIC DNA]</scope>
    <source>
        <strain>ATCC 24698 / 74-OR23-1A / CBS 708.71 / DSM 1257 / FGSC 987</strain>
    </source>
</reference>
<reference key="2">
    <citation type="book" date="1984" name="H+-ATPase (ATP synthase): structure, function, biogenesis. The F0F1 complex of coupling membranes">
        <title>Nucleotide sequences of the nuclear genes for the proteolipid and delta subunit of the mitochondrial ATP synthase from Neurospora crassa.</title>
        <editorList>
            <person name="Papa S."/>
            <person name="Altendorf K."/>
            <person name="Ernster L."/>
            <person name="Packer L."/>
        </editorList>
        <authorList>
            <person name="Sebald W."/>
            <person name="Kruse B."/>
        </authorList>
    </citation>
    <scope>NUCLEOTIDE SEQUENCE [GENOMIC DNA] OF 27-165</scope>
</reference>
<gene>
    <name type="primary">des</name>
    <name type="synonym">atp16</name>
    <name type="ORF">NCU00385</name>
</gene>
<proteinExistence type="inferred from homology"/>
<evidence type="ECO:0000250" key="1"/>
<evidence type="ECO:0000305" key="2"/>
<sequence length="165" mass="17589">MNSLRIARAALRVRPTAVRAPLQRRGYAEAVADKIKLSLSLPHQAIYKSQDVVQVNIPAVSGEMGVLANHVPSIEQLKPGLVEVIEESGSNKQYFLSGGFAVVQPGSKLSINAVEGYALEDFSAEAVRAQIAEAQKIVSGGGSQQDIAEAQVELEVLESLQAVLK</sequence>
<dbReference type="EMBL" id="CM002238">
    <property type="protein sequence ID" value="EAA28035.2"/>
    <property type="molecule type" value="Genomic_DNA"/>
</dbReference>
<dbReference type="RefSeq" id="XP_957271.2">
    <property type="nucleotide sequence ID" value="XM_952178.3"/>
</dbReference>
<dbReference type="SMR" id="P56525"/>
<dbReference type="FunCoup" id="P56525">
    <property type="interactions" value="720"/>
</dbReference>
<dbReference type="STRING" id="367110.P56525"/>
<dbReference type="PaxDb" id="5141-EFNCRP00000000026"/>
<dbReference type="EnsemblFungi" id="EAA28035">
    <property type="protein sequence ID" value="EAA28035"/>
    <property type="gene ID" value="NCU00385"/>
</dbReference>
<dbReference type="GeneID" id="3873434"/>
<dbReference type="KEGG" id="ncr:NCU00385"/>
<dbReference type="VEuPathDB" id="FungiDB:NCU00385"/>
<dbReference type="HOGENOM" id="CLU_084338_0_0_1"/>
<dbReference type="InParanoid" id="P56525"/>
<dbReference type="OrthoDB" id="270171at2759"/>
<dbReference type="Proteomes" id="UP000001805">
    <property type="component" value="Chromosome 3, Linkage Group III"/>
</dbReference>
<dbReference type="GO" id="GO:0005743">
    <property type="term" value="C:mitochondrial inner membrane"/>
    <property type="evidence" value="ECO:0007669"/>
    <property type="project" value="UniProtKB-SubCell"/>
</dbReference>
<dbReference type="GO" id="GO:0045259">
    <property type="term" value="C:proton-transporting ATP synthase complex"/>
    <property type="evidence" value="ECO:0007669"/>
    <property type="project" value="UniProtKB-KW"/>
</dbReference>
<dbReference type="GO" id="GO:0016887">
    <property type="term" value="F:ATP hydrolysis activity"/>
    <property type="evidence" value="ECO:0007669"/>
    <property type="project" value="EnsemblFungi"/>
</dbReference>
<dbReference type="GO" id="GO:0046933">
    <property type="term" value="F:proton-transporting ATP synthase activity, rotational mechanism"/>
    <property type="evidence" value="ECO:0007669"/>
    <property type="project" value="EnsemblFungi"/>
</dbReference>
<dbReference type="GO" id="GO:0015986">
    <property type="term" value="P:proton motive force-driven ATP synthesis"/>
    <property type="evidence" value="ECO:0000318"/>
    <property type="project" value="GO_Central"/>
</dbReference>
<dbReference type="CDD" id="cd12152">
    <property type="entry name" value="F1-ATPase_delta"/>
    <property type="match status" value="1"/>
</dbReference>
<dbReference type="FunFam" id="2.60.15.10:FF:000003">
    <property type="entry name" value="ATP synthase subunit delta, mitochondrial"/>
    <property type="match status" value="1"/>
</dbReference>
<dbReference type="Gene3D" id="6.10.140.880">
    <property type="match status" value="1"/>
</dbReference>
<dbReference type="Gene3D" id="2.60.15.10">
    <property type="entry name" value="F0F1 ATP synthase delta/epsilon subunit, N-terminal"/>
    <property type="match status" value="1"/>
</dbReference>
<dbReference type="HAMAP" id="MF_00530">
    <property type="entry name" value="ATP_synth_epsil_bac"/>
    <property type="match status" value="1"/>
</dbReference>
<dbReference type="InterPro" id="IPR001469">
    <property type="entry name" value="ATP_synth_F1_dsu/esu"/>
</dbReference>
<dbReference type="InterPro" id="IPR020546">
    <property type="entry name" value="ATP_synth_F1_dsu/esu_N"/>
</dbReference>
<dbReference type="InterPro" id="IPR048938">
    <property type="entry name" value="ATPD_C_fung"/>
</dbReference>
<dbReference type="InterPro" id="IPR036771">
    <property type="entry name" value="ATPsynth_dsu/esu_N"/>
</dbReference>
<dbReference type="PANTHER" id="PTHR13822">
    <property type="entry name" value="ATP SYNTHASE DELTA/EPSILON CHAIN"/>
    <property type="match status" value="1"/>
</dbReference>
<dbReference type="PANTHER" id="PTHR13822:SF7">
    <property type="entry name" value="ATP SYNTHASE SUBUNIT DELTA, MITOCHONDRIAL"/>
    <property type="match status" value="1"/>
</dbReference>
<dbReference type="Pfam" id="PF02823">
    <property type="entry name" value="ATP-synt_DE_N"/>
    <property type="match status" value="1"/>
</dbReference>
<dbReference type="Pfam" id="PF21334">
    <property type="entry name" value="ATPD_C_fung"/>
    <property type="match status" value="1"/>
</dbReference>
<dbReference type="SUPFAM" id="SSF51344">
    <property type="entry name" value="Epsilon subunit of F1F0-ATP synthase N-terminal domain"/>
    <property type="match status" value="1"/>
</dbReference>
<accession>P56525</accession>
<accession>Q7RV71</accession>
<comment type="function">
    <text>Mitochondrial membrane ATP synthase (F(1)F(0) ATP synthase or Complex V) produces ATP from ADP in the presence of a proton gradient across the membrane which is generated by electron transport complexes of the respiratory chain. F-type ATPases consist of two structural domains, F(1) - containing the extramembraneous catalytic core, and F(0) - containing the membrane proton channel, linked together by a central stalk and a peripheral stalk. During catalysis, ATP turnover in the catalytic domain of F(1) is coupled via a rotary mechanism of the central stalk subunits to proton translocation. Part of the complex F(1) domain and of the central stalk which is part of the complex rotary element. Rotation of the central stalk against the surrounding alpha(3)beta(3) subunits leads to hydrolysis of ATP in three separate catalytic sites on the beta subunits.</text>
</comment>
<comment type="subunit">
    <text>F-type ATPases have 2 components, CF(1) - the catalytic core - and CF(0) - the membrane proton channel. CF(1) has five subunits: alpha(3), beta(3), gamma(1), delta(1), epsilon(1). CF(0) has three main subunits: a, b and c.</text>
</comment>
<comment type="subcellular location">
    <subcellularLocation>
        <location>Mitochondrion</location>
    </subcellularLocation>
    <subcellularLocation>
        <location>Mitochondrion inner membrane</location>
    </subcellularLocation>
</comment>
<comment type="similarity">
    <text evidence="2">Belongs to the ATPase epsilon chain family.</text>
</comment>
<name>ATPD_NEUCR</name>
<organism>
    <name type="scientific">Neurospora crassa (strain ATCC 24698 / 74-OR23-1A / CBS 708.71 / DSM 1257 / FGSC 987)</name>
    <dbReference type="NCBI Taxonomy" id="367110"/>
    <lineage>
        <taxon>Eukaryota</taxon>
        <taxon>Fungi</taxon>
        <taxon>Dikarya</taxon>
        <taxon>Ascomycota</taxon>
        <taxon>Pezizomycotina</taxon>
        <taxon>Sordariomycetes</taxon>
        <taxon>Sordariomycetidae</taxon>
        <taxon>Sordariales</taxon>
        <taxon>Sordariaceae</taxon>
        <taxon>Neurospora</taxon>
    </lineage>
</organism>
<feature type="transit peptide" description="Mitochondrion" evidence="1">
    <location>
        <begin position="1"/>
        <end position="27"/>
    </location>
</feature>
<feature type="chain" id="PRO_0000002669" description="ATP synthase subunit delta, mitochondrial">
    <location>
        <begin position="28"/>
        <end position="165"/>
    </location>
</feature>
<keyword id="KW-0066">ATP synthesis</keyword>
<keyword id="KW-0139">CF(1)</keyword>
<keyword id="KW-0375">Hydrogen ion transport</keyword>
<keyword id="KW-0406">Ion transport</keyword>
<keyword id="KW-0472">Membrane</keyword>
<keyword id="KW-0496">Mitochondrion</keyword>
<keyword id="KW-0999">Mitochondrion inner membrane</keyword>
<keyword id="KW-1185">Reference proteome</keyword>
<keyword id="KW-0809">Transit peptide</keyword>
<keyword id="KW-0813">Transport</keyword>
<protein>
    <recommendedName>
        <fullName>ATP synthase subunit delta, mitochondrial</fullName>
    </recommendedName>
    <alternativeName>
        <fullName>F-ATPase delta subunit</fullName>
    </alternativeName>
</protein>